<proteinExistence type="inferred from homology"/>
<gene>
    <name evidence="1" type="primary">rlmG</name>
    <name type="ordered locus">PputW619_0790</name>
</gene>
<comment type="function">
    <text evidence="1">Specifically methylates the guanine in position 1835 (m2G1835) of 23S rRNA.</text>
</comment>
<comment type="catalytic activity">
    <reaction evidence="1">
        <text>guanosine(1835) in 23S rRNA + S-adenosyl-L-methionine = N(2)-methylguanosine(1835) in 23S rRNA + S-adenosyl-L-homocysteine + H(+)</text>
        <dbReference type="Rhea" id="RHEA:42744"/>
        <dbReference type="Rhea" id="RHEA-COMP:10217"/>
        <dbReference type="Rhea" id="RHEA-COMP:10218"/>
        <dbReference type="ChEBI" id="CHEBI:15378"/>
        <dbReference type="ChEBI" id="CHEBI:57856"/>
        <dbReference type="ChEBI" id="CHEBI:59789"/>
        <dbReference type="ChEBI" id="CHEBI:74269"/>
        <dbReference type="ChEBI" id="CHEBI:74481"/>
        <dbReference type="EC" id="2.1.1.174"/>
    </reaction>
</comment>
<comment type="subcellular location">
    <subcellularLocation>
        <location evidence="1">Cytoplasm</location>
    </subcellularLocation>
</comment>
<comment type="similarity">
    <text evidence="1">Belongs to the methyltransferase superfamily. RlmG family.</text>
</comment>
<name>RLMG_PSEPW</name>
<evidence type="ECO:0000255" key="1">
    <source>
        <dbReference type="HAMAP-Rule" id="MF_01859"/>
    </source>
</evidence>
<organism>
    <name type="scientific">Pseudomonas putida (strain W619)</name>
    <dbReference type="NCBI Taxonomy" id="390235"/>
    <lineage>
        <taxon>Bacteria</taxon>
        <taxon>Pseudomonadati</taxon>
        <taxon>Pseudomonadota</taxon>
        <taxon>Gammaproteobacteria</taxon>
        <taxon>Pseudomonadales</taxon>
        <taxon>Pseudomonadaceae</taxon>
        <taxon>Pseudomonas</taxon>
    </lineage>
</organism>
<accession>B1J2W7</accession>
<feature type="chain" id="PRO_0000366482" description="Ribosomal RNA large subunit methyltransferase G">
    <location>
        <begin position="1"/>
        <end position="374"/>
    </location>
</feature>
<keyword id="KW-0963">Cytoplasm</keyword>
<keyword id="KW-0489">Methyltransferase</keyword>
<keyword id="KW-0698">rRNA processing</keyword>
<keyword id="KW-0949">S-adenosyl-L-methionine</keyword>
<keyword id="KW-0808">Transferase</keyword>
<reference key="1">
    <citation type="submission" date="2008-02" db="EMBL/GenBank/DDBJ databases">
        <title>Complete sequence of Pseudomonas putida W619.</title>
        <authorList>
            <person name="Copeland A."/>
            <person name="Lucas S."/>
            <person name="Lapidus A."/>
            <person name="Barry K."/>
            <person name="Detter J.C."/>
            <person name="Glavina del Rio T."/>
            <person name="Dalin E."/>
            <person name="Tice H."/>
            <person name="Pitluck S."/>
            <person name="Chain P."/>
            <person name="Malfatti S."/>
            <person name="Shin M."/>
            <person name="Vergez L."/>
            <person name="Schmutz J."/>
            <person name="Larimer F."/>
            <person name="Land M."/>
            <person name="Hauser L."/>
            <person name="Kyrpides N."/>
            <person name="Kim E."/>
            <person name="Taghavi S."/>
            <person name="Vangronsveld D."/>
            <person name="van der Lelie D."/>
            <person name="Richardson P."/>
        </authorList>
    </citation>
    <scope>NUCLEOTIDE SEQUENCE [LARGE SCALE GENOMIC DNA]</scope>
    <source>
        <strain>W619</strain>
    </source>
</reference>
<dbReference type="EC" id="2.1.1.174" evidence="1"/>
<dbReference type="EMBL" id="CP000949">
    <property type="protein sequence ID" value="ACA71295.1"/>
    <property type="molecule type" value="Genomic_DNA"/>
</dbReference>
<dbReference type="SMR" id="B1J2W7"/>
<dbReference type="STRING" id="390235.PputW619_0790"/>
<dbReference type="KEGG" id="ppw:PputW619_0790"/>
<dbReference type="eggNOG" id="COG2813">
    <property type="taxonomic scope" value="Bacteria"/>
</dbReference>
<dbReference type="HOGENOM" id="CLU_040288_4_0_6"/>
<dbReference type="OrthoDB" id="29650at2"/>
<dbReference type="GO" id="GO:0005737">
    <property type="term" value="C:cytoplasm"/>
    <property type="evidence" value="ECO:0007669"/>
    <property type="project" value="UniProtKB-SubCell"/>
</dbReference>
<dbReference type="GO" id="GO:0052916">
    <property type="term" value="F:23S rRNA (guanine(1835)-N(2))-methyltransferase activity"/>
    <property type="evidence" value="ECO:0007669"/>
    <property type="project" value="UniProtKB-EC"/>
</dbReference>
<dbReference type="GO" id="GO:0003676">
    <property type="term" value="F:nucleic acid binding"/>
    <property type="evidence" value="ECO:0007669"/>
    <property type="project" value="InterPro"/>
</dbReference>
<dbReference type="CDD" id="cd02440">
    <property type="entry name" value="AdoMet_MTases"/>
    <property type="match status" value="1"/>
</dbReference>
<dbReference type="Gene3D" id="3.40.50.150">
    <property type="entry name" value="Vaccinia Virus protein VP39"/>
    <property type="match status" value="2"/>
</dbReference>
<dbReference type="HAMAP" id="MF_01859">
    <property type="entry name" value="23SrRNA_methyltr_G"/>
    <property type="match status" value="1"/>
</dbReference>
<dbReference type="InterPro" id="IPR002052">
    <property type="entry name" value="DNA_methylase_N6_adenine_CS"/>
</dbReference>
<dbReference type="InterPro" id="IPR017237">
    <property type="entry name" value="rRNA_m2G-MeTrfase_RlmG"/>
</dbReference>
<dbReference type="InterPro" id="IPR046977">
    <property type="entry name" value="RsmC/RlmG"/>
</dbReference>
<dbReference type="InterPro" id="IPR029063">
    <property type="entry name" value="SAM-dependent_MTases_sf"/>
</dbReference>
<dbReference type="InterPro" id="IPR007848">
    <property type="entry name" value="Small_mtfrase_dom"/>
</dbReference>
<dbReference type="PANTHER" id="PTHR47816:SF5">
    <property type="entry name" value="RIBOSOMAL RNA LARGE SUBUNIT METHYLTRANSFERASE G"/>
    <property type="match status" value="1"/>
</dbReference>
<dbReference type="PANTHER" id="PTHR47816">
    <property type="entry name" value="RIBOSOMAL RNA SMALL SUBUNIT METHYLTRANSFERASE C"/>
    <property type="match status" value="1"/>
</dbReference>
<dbReference type="Pfam" id="PF05175">
    <property type="entry name" value="MTS"/>
    <property type="match status" value="1"/>
</dbReference>
<dbReference type="PIRSF" id="PIRSF037565">
    <property type="entry name" value="RRNA_m2G_Mtase_RsmD_prd"/>
    <property type="match status" value="1"/>
</dbReference>
<dbReference type="SUPFAM" id="SSF53335">
    <property type="entry name" value="S-adenosyl-L-methionine-dependent methyltransferases"/>
    <property type="match status" value="1"/>
</dbReference>
<sequence length="374" mass="40646">MPLLTTPYAELDLIRQPDQANDPLQAFDAADEYLLEQLHAQQLAAESRVLVLNDSFGALAASLVDHVSVVSSGDSHLAHMALEKNLARNGKAFDSVPFVPASEHWQGHFDRVLVRVPKTLALLEEQLIRLQGHLAPGAQVIAAAMIKHLPRAAGELLEKYIGPVQASLAQKKARLLTANFAQRPGASSPYPTRYRLDSPALELLNHANVFCRDGLDIGTRAFLPHLPRDLGNARVADLGCGNGVLAIANALTNPQAHYTLVDESYMAVQSAQENWQAALGDRAVTVLAGDGLAGVEKQSLDVVLCNPPFHQQQVVGDFLAWRMFQQAREALVVGGALYIVGNRHLGYHSKLARLFRGVEQVAATPKFVILKARK</sequence>
<protein>
    <recommendedName>
        <fullName evidence="1">Ribosomal RNA large subunit methyltransferase G</fullName>
        <ecNumber evidence="1">2.1.1.174</ecNumber>
    </recommendedName>
    <alternativeName>
        <fullName evidence="1">23S rRNA m2G1835 methyltransferase</fullName>
    </alternativeName>
    <alternativeName>
        <fullName evidence="1">rRNA (guanine-N(2)-)-methyltransferase RlmG</fullName>
    </alternativeName>
</protein>